<proteinExistence type="inferred from homology"/>
<protein>
    <recommendedName>
        <fullName evidence="1">Small ribosomal subunit protein uS10</fullName>
    </recommendedName>
    <alternativeName>
        <fullName evidence="2">30S ribosomal protein S10</fullName>
    </alternativeName>
</protein>
<accession>Q8G418</accession>
<reference key="1">
    <citation type="journal article" date="2002" name="Proc. Natl. Acad. Sci. U.S.A.">
        <title>The genome sequence of Bifidobacterium longum reflects its adaptation to the human gastrointestinal tract.</title>
        <authorList>
            <person name="Schell M.A."/>
            <person name="Karmirantzou M."/>
            <person name="Snel B."/>
            <person name="Vilanova D."/>
            <person name="Berger B."/>
            <person name="Pessi G."/>
            <person name="Zwahlen M.-C."/>
            <person name="Desiere F."/>
            <person name="Bork P."/>
            <person name="Delley M."/>
            <person name="Pridmore R.D."/>
            <person name="Arigoni F."/>
        </authorList>
    </citation>
    <scope>NUCLEOTIDE SEQUENCE [LARGE SCALE GENOMIC DNA]</scope>
    <source>
        <strain>NCC 2705</strain>
    </source>
</reference>
<keyword id="KW-1185">Reference proteome</keyword>
<keyword id="KW-0687">Ribonucleoprotein</keyword>
<keyword id="KW-0689">Ribosomal protein</keyword>
<feature type="chain" id="PRO_0000146500" description="Small ribosomal subunit protein uS10">
    <location>
        <begin position="1"/>
        <end position="102"/>
    </location>
</feature>
<gene>
    <name evidence="1" type="primary">rpsJ</name>
    <name type="ordered locus">BL1577</name>
</gene>
<name>RS10_BIFLO</name>
<organism>
    <name type="scientific">Bifidobacterium longum (strain NCC 2705)</name>
    <dbReference type="NCBI Taxonomy" id="206672"/>
    <lineage>
        <taxon>Bacteria</taxon>
        <taxon>Bacillati</taxon>
        <taxon>Actinomycetota</taxon>
        <taxon>Actinomycetes</taxon>
        <taxon>Bifidobacteriales</taxon>
        <taxon>Bifidobacteriaceae</taxon>
        <taxon>Bifidobacterium</taxon>
    </lineage>
</organism>
<sequence length="102" mass="11554">MAGQKIRIRLKSYDHEVIDQSAKKIVETVTNAGATVVGPVPLPTEKNVFCVIRSPHKYKDSREHFEMRTHKRLIDIVDPTPKAVDSLMHIDLPADVNIEIKL</sequence>
<evidence type="ECO:0000255" key="1">
    <source>
        <dbReference type="HAMAP-Rule" id="MF_00508"/>
    </source>
</evidence>
<evidence type="ECO:0000305" key="2"/>
<comment type="function">
    <text evidence="1">Involved in the binding of tRNA to the ribosomes.</text>
</comment>
<comment type="subunit">
    <text evidence="1">Part of the 30S ribosomal subunit.</text>
</comment>
<comment type="similarity">
    <text evidence="1">Belongs to the universal ribosomal protein uS10 family.</text>
</comment>
<dbReference type="EMBL" id="AE014295">
    <property type="protein sequence ID" value="AAN25368.1"/>
    <property type="molecule type" value="Genomic_DNA"/>
</dbReference>
<dbReference type="RefSeq" id="NP_696732.1">
    <property type="nucleotide sequence ID" value="NC_004307.2"/>
</dbReference>
<dbReference type="RefSeq" id="WP_003827292.1">
    <property type="nucleotide sequence ID" value="NC_004307.2"/>
</dbReference>
<dbReference type="SMR" id="Q8G418"/>
<dbReference type="STRING" id="206672.BL1577"/>
<dbReference type="EnsemblBacteria" id="AAN25368">
    <property type="protein sequence ID" value="AAN25368"/>
    <property type="gene ID" value="BL1577"/>
</dbReference>
<dbReference type="GeneID" id="98300221"/>
<dbReference type="KEGG" id="blo:BL1577"/>
<dbReference type="PATRIC" id="fig|206672.9.peg.1634"/>
<dbReference type="HOGENOM" id="CLU_122625_1_3_11"/>
<dbReference type="OrthoDB" id="9804464at2"/>
<dbReference type="PhylomeDB" id="Q8G418"/>
<dbReference type="PRO" id="PR:Q8G418"/>
<dbReference type="Proteomes" id="UP000000439">
    <property type="component" value="Chromosome"/>
</dbReference>
<dbReference type="GO" id="GO:1990904">
    <property type="term" value="C:ribonucleoprotein complex"/>
    <property type="evidence" value="ECO:0007669"/>
    <property type="project" value="UniProtKB-KW"/>
</dbReference>
<dbReference type="GO" id="GO:0005840">
    <property type="term" value="C:ribosome"/>
    <property type="evidence" value="ECO:0007669"/>
    <property type="project" value="UniProtKB-KW"/>
</dbReference>
<dbReference type="GO" id="GO:0003735">
    <property type="term" value="F:structural constituent of ribosome"/>
    <property type="evidence" value="ECO:0007669"/>
    <property type="project" value="InterPro"/>
</dbReference>
<dbReference type="GO" id="GO:0000049">
    <property type="term" value="F:tRNA binding"/>
    <property type="evidence" value="ECO:0007669"/>
    <property type="project" value="UniProtKB-UniRule"/>
</dbReference>
<dbReference type="GO" id="GO:0006412">
    <property type="term" value="P:translation"/>
    <property type="evidence" value="ECO:0007669"/>
    <property type="project" value="UniProtKB-UniRule"/>
</dbReference>
<dbReference type="FunFam" id="3.30.70.600:FF:000001">
    <property type="entry name" value="30S ribosomal protein S10"/>
    <property type="match status" value="1"/>
</dbReference>
<dbReference type="Gene3D" id="3.30.70.600">
    <property type="entry name" value="Ribosomal protein S10 domain"/>
    <property type="match status" value="1"/>
</dbReference>
<dbReference type="HAMAP" id="MF_00508">
    <property type="entry name" value="Ribosomal_uS10"/>
    <property type="match status" value="1"/>
</dbReference>
<dbReference type="InterPro" id="IPR001848">
    <property type="entry name" value="Ribosomal_uS10"/>
</dbReference>
<dbReference type="InterPro" id="IPR018268">
    <property type="entry name" value="Ribosomal_uS10_CS"/>
</dbReference>
<dbReference type="InterPro" id="IPR027486">
    <property type="entry name" value="Ribosomal_uS10_dom"/>
</dbReference>
<dbReference type="InterPro" id="IPR036838">
    <property type="entry name" value="Ribosomal_uS10_dom_sf"/>
</dbReference>
<dbReference type="NCBIfam" id="NF001861">
    <property type="entry name" value="PRK00596.1"/>
    <property type="match status" value="1"/>
</dbReference>
<dbReference type="NCBIfam" id="TIGR01049">
    <property type="entry name" value="rpsJ_bact"/>
    <property type="match status" value="1"/>
</dbReference>
<dbReference type="PANTHER" id="PTHR11700">
    <property type="entry name" value="30S RIBOSOMAL PROTEIN S10 FAMILY MEMBER"/>
    <property type="match status" value="1"/>
</dbReference>
<dbReference type="Pfam" id="PF00338">
    <property type="entry name" value="Ribosomal_S10"/>
    <property type="match status" value="1"/>
</dbReference>
<dbReference type="PRINTS" id="PR00971">
    <property type="entry name" value="RIBOSOMALS10"/>
</dbReference>
<dbReference type="SMART" id="SM01403">
    <property type="entry name" value="Ribosomal_S10"/>
    <property type="match status" value="1"/>
</dbReference>
<dbReference type="SUPFAM" id="SSF54999">
    <property type="entry name" value="Ribosomal protein S10"/>
    <property type="match status" value="1"/>
</dbReference>
<dbReference type="PROSITE" id="PS00361">
    <property type="entry name" value="RIBOSOMAL_S10"/>
    <property type="match status" value="1"/>
</dbReference>